<accession>A5GX16</accession>
<sequence length="405" mass="44230">MARANKVVLAYSGGVDTSVCIPYLKHEWGVEEVITFAADLGQGDELEPIRQKALDAGASQSLVGDLIEPFITEFAFPAIRANALYEGRYPLSTALARPLIARRLVEIAREVGADAVAHGCTGKGNDQVRFDVAIGALAPDLKVLTPAREWGMSREETIAYGERYGLPSPVSKRSPYSIDLNLLGRSIEAGPLEDPDVEPPEEVFAMTCSTEAAPAQPELVSIGFEAGLPVSINGQRLDPVSLIREANRLAGSHGFGRLDMIENRVVGIKSREIYETPGLLLLIQAHQELESLTLAADVLRTKRQLEMQWADLVYQGLWFGPLKDALDGFIERTQLTVNGSVRIKLHRGSATVVGRSSSDSLYEPDMATYGAEDQFDHRAASGFIYVWGLPTRLWAAAKRRRGHHG</sequence>
<organism>
    <name type="scientific">Synechococcus sp. (strain RCC307)</name>
    <dbReference type="NCBI Taxonomy" id="316278"/>
    <lineage>
        <taxon>Bacteria</taxon>
        <taxon>Bacillati</taxon>
        <taxon>Cyanobacteriota</taxon>
        <taxon>Cyanophyceae</taxon>
        <taxon>Synechococcales</taxon>
        <taxon>Synechococcaceae</taxon>
        <taxon>Synechococcus</taxon>
    </lineage>
</organism>
<name>ASSY_SYNR3</name>
<keyword id="KW-0028">Amino-acid biosynthesis</keyword>
<keyword id="KW-0055">Arginine biosynthesis</keyword>
<keyword id="KW-0067">ATP-binding</keyword>
<keyword id="KW-0963">Cytoplasm</keyword>
<keyword id="KW-0436">Ligase</keyword>
<keyword id="KW-0547">Nucleotide-binding</keyword>
<keyword id="KW-1185">Reference proteome</keyword>
<dbReference type="EC" id="6.3.4.5" evidence="1"/>
<dbReference type="EMBL" id="CT978603">
    <property type="protein sequence ID" value="CAK29425.1"/>
    <property type="status" value="ALT_INIT"/>
    <property type="molecule type" value="Genomic_DNA"/>
</dbReference>
<dbReference type="SMR" id="A5GX16"/>
<dbReference type="STRING" id="316278.SynRCC307_2522"/>
<dbReference type="KEGG" id="syr:SynRCC307_2522"/>
<dbReference type="eggNOG" id="COG0137">
    <property type="taxonomic scope" value="Bacteria"/>
</dbReference>
<dbReference type="HOGENOM" id="CLU_032784_4_2_3"/>
<dbReference type="OrthoDB" id="9801641at2"/>
<dbReference type="UniPathway" id="UPA00068">
    <property type="reaction ID" value="UER00113"/>
</dbReference>
<dbReference type="Proteomes" id="UP000001115">
    <property type="component" value="Chromosome"/>
</dbReference>
<dbReference type="GO" id="GO:0005737">
    <property type="term" value="C:cytoplasm"/>
    <property type="evidence" value="ECO:0007669"/>
    <property type="project" value="UniProtKB-SubCell"/>
</dbReference>
<dbReference type="GO" id="GO:0004055">
    <property type="term" value="F:argininosuccinate synthase activity"/>
    <property type="evidence" value="ECO:0007669"/>
    <property type="project" value="UniProtKB-UniRule"/>
</dbReference>
<dbReference type="GO" id="GO:0005524">
    <property type="term" value="F:ATP binding"/>
    <property type="evidence" value="ECO:0007669"/>
    <property type="project" value="UniProtKB-UniRule"/>
</dbReference>
<dbReference type="GO" id="GO:0000053">
    <property type="term" value="P:argininosuccinate metabolic process"/>
    <property type="evidence" value="ECO:0007669"/>
    <property type="project" value="TreeGrafter"/>
</dbReference>
<dbReference type="GO" id="GO:0006526">
    <property type="term" value="P:L-arginine biosynthetic process"/>
    <property type="evidence" value="ECO:0007669"/>
    <property type="project" value="UniProtKB-UniRule"/>
</dbReference>
<dbReference type="GO" id="GO:0000050">
    <property type="term" value="P:urea cycle"/>
    <property type="evidence" value="ECO:0007669"/>
    <property type="project" value="TreeGrafter"/>
</dbReference>
<dbReference type="CDD" id="cd01999">
    <property type="entry name" value="ASS"/>
    <property type="match status" value="1"/>
</dbReference>
<dbReference type="FunFam" id="3.40.50.620:FF:000019">
    <property type="entry name" value="Argininosuccinate synthase"/>
    <property type="match status" value="1"/>
</dbReference>
<dbReference type="FunFam" id="3.90.1260.10:FF:000007">
    <property type="entry name" value="Argininosuccinate synthase"/>
    <property type="match status" value="1"/>
</dbReference>
<dbReference type="Gene3D" id="3.90.1260.10">
    <property type="entry name" value="Argininosuccinate synthetase, chain A, domain 2"/>
    <property type="match status" value="1"/>
</dbReference>
<dbReference type="Gene3D" id="3.40.50.620">
    <property type="entry name" value="HUPs"/>
    <property type="match status" value="1"/>
</dbReference>
<dbReference type="Gene3D" id="1.20.5.470">
    <property type="entry name" value="Single helix bin"/>
    <property type="match status" value="1"/>
</dbReference>
<dbReference type="HAMAP" id="MF_00005">
    <property type="entry name" value="Arg_succ_synth_type1"/>
    <property type="match status" value="1"/>
</dbReference>
<dbReference type="InterPro" id="IPR048268">
    <property type="entry name" value="Arginosuc_syn_C"/>
</dbReference>
<dbReference type="InterPro" id="IPR048267">
    <property type="entry name" value="Arginosuc_syn_N"/>
</dbReference>
<dbReference type="InterPro" id="IPR001518">
    <property type="entry name" value="Arginosuc_synth"/>
</dbReference>
<dbReference type="InterPro" id="IPR018223">
    <property type="entry name" value="Arginosuc_synth_CS"/>
</dbReference>
<dbReference type="InterPro" id="IPR023434">
    <property type="entry name" value="Arginosuc_synth_type_1_subfam"/>
</dbReference>
<dbReference type="InterPro" id="IPR024074">
    <property type="entry name" value="AS_cat/multimer_dom_body"/>
</dbReference>
<dbReference type="InterPro" id="IPR014729">
    <property type="entry name" value="Rossmann-like_a/b/a_fold"/>
</dbReference>
<dbReference type="NCBIfam" id="TIGR00032">
    <property type="entry name" value="argG"/>
    <property type="match status" value="1"/>
</dbReference>
<dbReference type="NCBIfam" id="NF001770">
    <property type="entry name" value="PRK00509.1"/>
    <property type="match status" value="1"/>
</dbReference>
<dbReference type="PANTHER" id="PTHR11587">
    <property type="entry name" value="ARGININOSUCCINATE SYNTHASE"/>
    <property type="match status" value="1"/>
</dbReference>
<dbReference type="PANTHER" id="PTHR11587:SF2">
    <property type="entry name" value="ARGININOSUCCINATE SYNTHASE"/>
    <property type="match status" value="1"/>
</dbReference>
<dbReference type="Pfam" id="PF20979">
    <property type="entry name" value="Arginosuc_syn_C"/>
    <property type="match status" value="1"/>
</dbReference>
<dbReference type="Pfam" id="PF00764">
    <property type="entry name" value="Arginosuc_synth"/>
    <property type="match status" value="1"/>
</dbReference>
<dbReference type="SUPFAM" id="SSF52402">
    <property type="entry name" value="Adenine nucleotide alpha hydrolases-like"/>
    <property type="match status" value="1"/>
</dbReference>
<dbReference type="SUPFAM" id="SSF69864">
    <property type="entry name" value="Argininosuccinate synthetase, C-terminal domain"/>
    <property type="match status" value="1"/>
</dbReference>
<dbReference type="PROSITE" id="PS00564">
    <property type="entry name" value="ARGININOSUCCIN_SYN_1"/>
    <property type="match status" value="1"/>
</dbReference>
<dbReference type="PROSITE" id="PS00565">
    <property type="entry name" value="ARGININOSUCCIN_SYN_2"/>
    <property type="match status" value="1"/>
</dbReference>
<gene>
    <name evidence="1" type="primary">argG</name>
    <name type="ordered locus">SynRCC307_2522</name>
</gene>
<protein>
    <recommendedName>
        <fullName evidence="1">Argininosuccinate synthase</fullName>
        <ecNumber evidence="1">6.3.4.5</ecNumber>
    </recommendedName>
    <alternativeName>
        <fullName evidence="1">Citrulline--aspartate ligase</fullName>
    </alternativeName>
</protein>
<reference key="1">
    <citation type="submission" date="2006-05" db="EMBL/GenBank/DDBJ databases">
        <authorList>
            <consortium name="Genoscope"/>
        </authorList>
    </citation>
    <scope>NUCLEOTIDE SEQUENCE [LARGE SCALE GENOMIC DNA]</scope>
    <source>
        <strain>RCC307</strain>
    </source>
</reference>
<proteinExistence type="inferred from homology"/>
<comment type="catalytic activity">
    <reaction evidence="1">
        <text>L-citrulline + L-aspartate + ATP = 2-(N(omega)-L-arginino)succinate + AMP + diphosphate + H(+)</text>
        <dbReference type="Rhea" id="RHEA:10932"/>
        <dbReference type="ChEBI" id="CHEBI:15378"/>
        <dbReference type="ChEBI" id="CHEBI:29991"/>
        <dbReference type="ChEBI" id="CHEBI:30616"/>
        <dbReference type="ChEBI" id="CHEBI:33019"/>
        <dbReference type="ChEBI" id="CHEBI:57472"/>
        <dbReference type="ChEBI" id="CHEBI:57743"/>
        <dbReference type="ChEBI" id="CHEBI:456215"/>
        <dbReference type="EC" id="6.3.4.5"/>
    </reaction>
</comment>
<comment type="pathway">
    <text evidence="1">Amino-acid biosynthesis; L-arginine biosynthesis; L-arginine from L-ornithine and carbamoyl phosphate: step 2/3.</text>
</comment>
<comment type="subunit">
    <text evidence="1">Homotetramer.</text>
</comment>
<comment type="subcellular location">
    <subcellularLocation>
        <location evidence="1">Cytoplasm</location>
    </subcellularLocation>
</comment>
<comment type="similarity">
    <text evidence="1">Belongs to the argininosuccinate synthase family. Type 1 subfamily.</text>
</comment>
<comment type="sequence caution" evidence="2">
    <conflict type="erroneous initiation">
        <sequence resource="EMBL-CDS" id="CAK29425"/>
    </conflict>
</comment>
<evidence type="ECO:0000255" key="1">
    <source>
        <dbReference type="HAMAP-Rule" id="MF_00005"/>
    </source>
</evidence>
<evidence type="ECO:0000305" key="2"/>
<feature type="chain" id="PRO_0000321320" description="Argininosuccinate synthase">
    <location>
        <begin position="1"/>
        <end position="405"/>
    </location>
</feature>
<feature type="binding site" evidence="1">
    <location>
        <begin position="10"/>
        <end position="18"/>
    </location>
    <ligand>
        <name>ATP</name>
        <dbReference type="ChEBI" id="CHEBI:30616"/>
    </ligand>
</feature>
<feature type="binding site" evidence="1">
    <location>
        <position position="38"/>
    </location>
    <ligand>
        <name>ATP</name>
        <dbReference type="ChEBI" id="CHEBI:30616"/>
    </ligand>
</feature>
<feature type="binding site" evidence="1">
    <location>
        <position position="89"/>
    </location>
    <ligand>
        <name>L-citrulline</name>
        <dbReference type="ChEBI" id="CHEBI:57743"/>
    </ligand>
</feature>
<feature type="binding site" evidence="1">
    <location>
        <position position="119"/>
    </location>
    <ligand>
        <name>ATP</name>
        <dbReference type="ChEBI" id="CHEBI:30616"/>
    </ligand>
</feature>
<feature type="binding site" evidence="1">
    <location>
        <position position="121"/>
    </location>
    <ligand>
        <name>L-aspartate</name>
        <dbReference type="ChEBI" id="CHEBI:29991"/>
    </ligand>
</feature>
<feature type="binding site" evidence="1">
    <location>
        <position position="125"/>
    </location>
    <ligand>
        <name>L-aspartate</name>
        <dbReference type="ChEBI" id="CHEBI:29991"/>
    </ligand>
</feature>
<feature type="binding site" evidence="1">
    <location>
        <position position="125"/>
    </location>
    <ligand>
        <name>L-citrulline</name>
        <dbReference type="ChEBI" id="CHEBI:57743"/>
    </ligand>
</feature>
<feature type="binding site" evidence="1">
    <location>
        <position position="126"/>
    </location>
    <ligand>
        <name>L-aspartate</name>
        <dbReference type="ChEBI" id="CHEBI:29991"/>
    </ligand>
</feature>
<feature type="binding site" evidence="1">
    <location>
        <position position="129"/>
    </location>
    <ligand>
        <name>L-citrulline</name>
        <dbReference type="ChEBI" id="CHEBI:57743"/>
    </ligand>
</feature>
<feature type="binding site" evidence="1">
    <location>
        <position position="177"/>
    </location>
    <ligand>
        <name>L-citrulline</name>
        <dbReference type="ChEBI" id="CHEBI:57743"/>
    </ligand>
</feature>
<feature type="binding site" evidence="1">
    <location>
        <position position="186"/>
    </location>
    <ligand>
        <name>L-citrulline</name>
        <dbReference type="ChEBI" id="CHEBI:57743"/>
    </ligand>
</feature>
<feature type="binding site" evidence="1">
    <location>
        <position position="262"/>
    </location>
    <ligand>
        <name>L-citrulline</name>
        <dbReference type="ChEBI" id="CHEBI:57743"/>
    </ligand>
</feature>
<feature type="binding site" evidence="1">
    <location>
        <position position="274"/>
    </location>
    <ligand>
        <name>L-citrulline</name>
        <dbReference type="ChEBI" id="CHEBI:57743"/>
    </ligand>
</feature>